<comment type="function">
    <text evidence="1">Rex escorts unspliced gag-pro-pol and singly spliced env mRNAs out of the nucleus of infected cells. These mRNAs carry a recognition sequence called Rex responsive element (RxRE or XRE) located at the 3' region of the long terminal repeat (LTR). This function is essential since most HTLV proteins are translated from unspliced or partially spliced pre-mRNAs that cannot exit the nucleus by the pathway used by fully processed cellular mRNAs. Rex itself is translated from a fully spliced mRNA that probably readily exits the nucleus. Rex's nuclear localization signal (NLS) binds directly to KPNB1/importin beta-1 without previous binding to KPNA1/importin alpha-1. KPNB1 binds to the GDP bound form of RAN (Ran-GDP) and targets Rex to the nucleus. In the nucleus, the conversion from Ran-GDP to Ran-GTP dissociates Rex from KPNB1 and allows Rex's binding to the RRE in viral pre-mRNAs. Rex multimerizes on the RRE via cooperative assembly. This multimerization is critical for its full biological activity, since it may shield the viral RNA from being spliced or down-regulated, and probably exposes Rex's nuclear export signal (NES) to the surface. Rex can then form a complex with XPO1/CRM1, RANBP3 and Ran-GTP, leading to nuclear export of the complex. Conversion from Ran-GTP to Ran-GDP mediates dissociation of the Rex/RRE/XPO1/RANBP3/RAN complex, so that Rex can return to the nucleus for a subsequent round of export (By similarity).</text>
</comment>
<comment type="subunit">
    <text evidence="1 3">Homomultimer. Multimeric assembly is essential for activity and involves XPO1. Binds to human XPO1 and KPNB1 (By similarity). Interacts (via N-terminal nuclear localization signal) with human NPM1.</text>
</comment>
<comment type="subcellular location">
    <molecule>Isoform Rex</molecule>
    <subcellularLocation>
        <location evidence="1">Host nucleus</location>
        <location evidence="1">Host nucleolus</location>
    </subcellularLocation>
    <subcellularLocation>
        <location evidence="1">Host cytoplasm</location>
    </subcellularLocation>
    <text evidence="1">The presence of both nuclear import and nuclear export signals leads to continuous shuttling between the nucleus and cytoplasm.</text>
</comment>
<comment type="subcellular location">
    <molecule>Isoform p21Rex</molecule>
    <subcellularLocation>
        <location evidence="4">Host cytoplasm</location>
    </subcellularLocation>
</comment>
<comment type="alternative products">
    <event type="alternative splicing"/>
    <isoform>
        <id>P0C208-1</id>
        <name>Rex</name>
        <name>p27Rex</name>
        <sequence type="displayed"/>
    </isoform>
    <isoform>
        <id>P0C208-2</id>
        <name>p21Rex</name>
        <name>p21</name>
        <sequence type="described" ref="VSP_021542"/>
    </isoform>
</comment>
<comment type="induction">
    <text>Down-regulated by P30II.</text>
</comment>
<comment type="domain">
    <text evidence="1">The RNA-binding motif binds to the RxRE, a complex secondary structure consisting of four stem loops and a long stretch of stem structure, present in incompletely spliced viral pre-mRNAs. This region also contains the NLS which mediates nuclear localization. These overlapping functions prevent Rex bound to RxRE from undesirable return to the nucleus. When Rex binds the RxRE, the NLS becomes masked while the NES remains accessible. The leucine-rich NES mediates binding to human XPO1 (By similarity).</text>
</comment>
<comment type="PTM">
    <text evidence="1">Phosphorylated.</text>
</comment>
<comment type="miscellaneous">
    <text>HTLV-1 lineages are divided in four clades, A (Cosmopolitan), B (Central African group), C (Melanesian group) and D (New Central African group).</text>
</comment>
<comment type="similarity">
    <text evidence="4">Belongs to the deltaretrovirus Rex protein family.</text>
</comment>
<evidence type="ECO:0000250" key="1"/>
<evidence type="ECO:0000256" key="2">
    <source>
        <dbReference type="SAM" id="MobiDB-lite"/>
    </source>
</evidence>
<evidence type="ECO:0000269" key="3">
    <source>
    </source>
</evidence>
<evidence type="ECO:0000305" key="4"/>
<feature type="chain" id="PRO_0000259785" description="Protein Rex">
    <location>
        <begin position="1"/>
        <end position="189"/>
    </location>
</feature>
<feature type="region of interest" description="Disordered" evidence="2">
    <location>
        <begin position="1"/>
        <end position="26"/>
    </location>
</feature>
<feature type="region of interest" description="Homomultimerization" evidence="1">
    <location>
        <begin position="56"/>
        <end position="70"/>
    </location>
</feature>
<feature type="region of interest" description="Disordered" evidence="2">
    <location>
        <begin position="87"/>
        <end position="189"/>
    </location>
</feature>
<feature type="region of interest" description="Homomultimerization" evidence="1">
    <location>
        <begin position="123"/>
        <end position="131"/>
    </location>
</feature>
<feature type="short sequence motif" description="Nuclear localization signal, and RNA-binding (RxRE)" evidence="1">
    <location>
        <begin position="2"/>
        <end position="18"/>
    </location>
</feature>
<feature type="short sequence motif" description="Nuclear export signal" evidence="1">
    <location>
        <begin position="82"/>
        <end position="93"/>
    </location>
</feature>
<feature type="compositionally biased region" description="Basic residues" evidence="2">
    <location>
        <begin position="1"/>
        <end position="16"/>
    </location>
</feature>
<feature type="compositionally biased region" description="Pro residues" evidence="2">
    <location>
        <begin position="115"/>
        <end position="125"/>
    </location>
</feature>
<feature type="compositionally biased region" description="Pro residues" evidence="2">
    <location>
        <begin position="178"/>
        <end position="189"/>
    </location>
</feature>
<feature type="modified residue" description="Phosphoserine; by host" evidence="1">
    <location>
        <position position="70"/>
    </location>
</feature>
<feature type="modified residue" description="Phosphothreonine; by host" evidence="1">
    <location>
        <position position="174"/>
    </location>
</feature>
<feature type="modified residue" description="Phosphoserine; by host" evidence="1">
    <location>
        <position position="177"/>
    </location>
</feature>
<feature type="splice variant" id="VSP_021542" description="In isoform p21Rex." evidence="4">
    <location>
        <begin position="1"/>
        <end position="78"/>
    </location>
</feature>
<accession>P0C208</accession>
<dbReference type="EMBL" id="L02534">
    <property type="status" value="NOT_ANNOTATED_CDS"/>
    <property type="molecule type" value="Genomic_DNA"/>
</dbReference>
<dbReference type="GO" id="GO:0030430">
    <property type="term" value="C:host cell cytoplasm"/>
    <property type="evidence" value="ECO:0007669"/>
    <property type="project" value="UniProtKB-SubCell"/>
</dbReference>
<dbReference type="GO" id="GO:0044196">
    <property type="term" value="C:host cell nucleolus"/>
    <property type="evidence" value="ECO:0007669"/>
    <property type="project" value="UniProtKB-SubCell"/>
</dbReference>
<dbReference type="GO" id="GO:0003723">
    <property type="term" value="F:RNA binding"/>
    <property type="evidence" value="ECO:0007669"/>
    <property type="project" value="UniProtKB-KW"/>
</dbReference>
<dbReference type="GO" id="GO:0051028">
    <property type="term" value="P:mRNA transport"/>
    <property type="evidence" value="ECO:0007669"/>
    <property type="project" value="UniProtKB-KW"/>
</dbReference>
<organismHost>
    <name type="scientific">Homo sapiens</name>
    <name type="common">Human</name>
    <dbReference type="NCBI Taxonomy" id="9606"/>
</organismHost>
<name>REX_HTL1L</name>
<keyword id="KW-0025">Alternative splicing</keyword>
<keyword id="KW-1035">Host cytoplasm</keyword>
<keyword id="KW-1048">Host nucleus</keyword>
<keyword id="KW-0945">Host-virus interaction</keyword>
<keyword id="KW-0509">mRNA transport</keyword>
<keyword id="KW-0597">Phosphoprotein</keyword>
<keyword id="KW-0694">RNA-binding</keyword>
<keyword id="KW-0813">Transport</keyword>
<protein>
    <recommendedName>
        <fullName>Protein Rex</fullName>
    </recommendedName>
    <alternativeName>
        <fullName>Rev homolog</fullName>
    </alternativeName>
    <alternativeName>
        <fullName>Rex-1</fullName>
    </alternativeName>
    <alternativeName>
        <fullName>p27Rex</fullName>
    </alternativeName>
</protein>
<sequence length="189" mass="20225">MPKTRRGPRRSQRKRPPTPWPTSQGLDKVFFTDIQSTCLETVYKATGAPSLGDYVRPAYIVTPYWPPVQSIRSPRTPSMDALSAQLYSSLSLGSPPSPPREPLKPSRSLPHRPLIQPPTFHPPSSRPYANTPPSEMGAWSPPLGSSSQACPSPTPASGPKTCTPSGEAPSSACTSISFPPPSPGPSCPR</sequence>
<reference key="1">
    <citation type="journal article" date="1993" name="J. Virol.">
        <title>Complete nucleotide sequence of a highly divergent human T-cell leukemia (lymphotropic) virus type I (HTLV-I) variant from melanesia: genetic and phylogenetic relationship to HTLV-I strains from other geographical regions.</title>
        <authorList>
            <person name="Gessain A."/>
            <person name="Boeri E."/>
            <person name="Yanagihara R."/>
            <person name="Gallo R.C."/>
            <person name="Franchini G."/>
        </authorList>
    </citation>
    <scope>NUCLEOTIDE SEQUENCE [GENOMIC DNA]</scope>
</reference>
<reference key="2">
    <citation type="journal article" date="1993" name="J. Biol. Chem.">
        <title>Nucleolar targeting signal of Rex protein of human T-cell leukemia virus type I specifically binds to nucleolar shuttle protein B-23.</title>
        <authorList>
            <person name="Adachi Y."/>
            <person name="Copeland T.D."/>
            <person name="Hatanaka M."/>
            <person name="Oroszlan S."/>
        </authorList>
    </citation>
    <scope>INTERACTION WITH HUMAN NPM1</scope>
</reference>
<reference key="3">
    <citation type="journal article" date="2005" name="Front. Biosci.">
        <title>The human T-cell leukemia virus Rex protein.</title>
        <authorList>
            <person name="Younis I."/>
            <person name="Green P.L."/>
        </authorList>
    </citation>
    <scope>REVIEW</scope>
</reference>
<reference key="4">
    <citation type="journal article" date="2005" name="Oncogene">
        <title>Transcriptional and post-transcriptional gene regulation of HTLV-1.</title>
        <authorList>
            <person name="Kashanchi F."/>
            <person name="Brady J.N."/>
        </authorList>
    </citation>
    <scope>REVIEW</scope>
</reference>
<organism>
    <name type="scientific">Human T-cell leukemia virus 1 (isolate Melanesia mel5 subtype C)</name>
    <name type="common">HTLV-1</name>
    <dbReference type="NCBI Taxonomy" id="402046"/>
    <lineage>
        <taxon>Viruses</taxon>
        <taxon>Riboviria</taxon>
        <taxon>Pararnavirae</taxon>
        <taxon>Artverviricota</taxon>
        <taxon>Revtraviricetes</taxon>
        <taxon>Ortervirales</taxon>
        <taxon>Retroviridae</taxon>
        <taxon>Orthoretrovirinae</taxon>
        <taxon>Deltaretrovirus</taxon>
        <taxon>Primate T-lymphotropic virus 1</taxon>
    </lineage>
</organism>
<proteinExistence type="evidence at protein level"/>